<keyword id="KW-0067">ATP-binding</keyword>
<keyword id="KW-0963">Cytoplasm</keyword>
<keyword id="KW-0324">Glycolysis</keyword>
<keyword id="KW-0418">Kinase</keyword>
<keyword id="KW-0547">Nucleotide-binding</keyword>
<keyword id="KW-0808">Transferase</keyword>
<sequence>MPSFKTLDDLSDIRGKRVLVRVDLNVPVKDGKVTDVTRIERVAPTILELSEKGAKVILLAHFGRPKDGPSSDLSLSLIAPSVEEVLDHAVLTASDCIGEAAASAVAAMNDGDILLLENTRFHKGEENNDSDFTKALAANGDIYVNDAFSAAHRAHASTEGLAHHLPAYAGRTMQAELEALEKGLGDPARPVVAIVGGAKVSTKIDLLMNLVKKVDALVIGGGMANTFIAARGTNVGKSLCEHDLAETAKQIMIEAATAGCAIILPEDGVIAREFKAGAANETVDINAIPADAMVLDVGPKSVEAINAWIERAATLVWNGPLGAFEIGPFDAATVAAAKYAAGRTIAGKLTSVAGGGDTVSALNHAGVADDFTYVSTAGGAFLEWMEGKELPGVAVLNAAAA</sequence>
<feature type="chain" id="PRO_1000203346" description="Phosphoglycerate kinase">
    <location>
        <begin position="1"/>
        <end position="401"/>
    </location>
</feature>
<feature type="binding site" evidence="1">
    <location>
        <begin position="23"/>
        <end position="25"/>
    </location>
    <ligand>
        <name>substrate</name>
    </ligand>
</feature>
<feature type="binding site" evidence="1">
    <location>
        <position position="38"/>
    </location>
    <ligand>
        <name>substrate</name>
    </ligand>
</feature>
<feature type="binding site" evidence="1">
    <location>
        <begin position="61"/>
        <end position="64"/>
    </location>
    <ligand>
        <name>substrate</name>
    </ligand>
</feature>
<feature type="binding site" evidence="1">
    <location>
        <position position="120"/>
    </location>
    <ligand>
        <name>substrate</name>
    </ligand>
</feature>
<feature type="binding site" evidence="1">
    <location>
        <position position="153"/>
    </location>
    <ligand>
        <name>substrate</name>
    </ligand>
</feature>
<feature type="binding site" evidence="1">
    <location>
        <position position="203"/>
    </location>
    <ligand>
        <name>ATP</name>
        <dbReference type="ChEBI" id="CHEBI:30616"/>
    </ligand>
</feature>
<feature type="binding site" evidence="1">
    <location>
        <position position="325"/>
    </location>
    <ligand>
        <name>ATP</name>
        <dbReference type="ChEBI" id="CHEBI:30616"/>
    </ligand>
</feature>
<feature type="binding site" evidence="1">
    <location>
        <begin position="355"/>
        <end position="358"/>
    </location>
    <ligand>
        <name>ATP</name>
        <dbReference type="ChEBI" id="CHEBI:30616"/>
    </ligand>
</feature>
<protein>
    <recommendedName>
        <fullName evidence="1">Phosphoglycerate kinase</fullName>
        <ecNumber evidence="1">2.7.2.3</ecNumber>
    </recommendedName>
</protein>
<proteinExistence type="inferred from homology"/>
<reference key="1">
    <citation type="journal article" date="2006" name="Genome Biol.">
        <title>The genome of Rhizobium leguminosarum has recognizable core and accessory components.</title>
        <authorList>
            <person name="Young J.P.W."/>
            <person name="Crossman L.C."/>
            <person name="Johnston A.W.B."/>
            <person name="Thomson N.R."/>
            <person name="Ghazoui Z.F."/>
            <person name="Hull K.H."/>
            <person name="Wexler M."/>
            <person name="Curson A.R.J."/>
            <person name="Todd J.D."/>
            <person name="Poole P.S."/>
            <person name="Mauchline T.H."/>
            <person name="East A.K."/>
            <person name="Quail M.A."/>
            <person name="Churcher C."/>
            <person name="Arrowsmith C."/>
            <person name="Cherevach I."/>
            <person name="Chillingworth T."/>
            <person name="Clarke K."/>
            <person name="Cronin A."/>
            <person name="Davis P."/>
            <person name="Fraser A."/>
            <person name="Hance Z."/>
            <person name="Hauser H."/>
            <person name="Jagels K."/>
            <person name="Moule S."/>
            <person name="Mungall K."/>
            <person name="Norbertczak H."/>
            <person name="Rabbinowitsch E."/>
            <person name="Sanders M."/>
            <person name="Simmonds M."/>
            <person name="Whitehead S."/>
            <person name="Parkhill J."/>
        </authorList>
    </citation>
    <scope>NUCLEOTIDE SEQUENCE [LARGE SCALE GENOMIC DNA]</scope>
    <source>
        <strain>DSM 114642 / LMG 32736 / 3841</strain>
    </source>
</reference>
<comment type="catalytic activity">
    <reaction evidence="1">
        <text>(2R)-3-phosphoglycerate + ATP = (2R)-3-phospho-glyceroyl phosphate + ADP</text>
        <dbReference type="Rhea" id="RHEA:14801"/>
        <dbReference type="ChEBI" id="CHEBI:30616"/>
        <dbReference type="ChEBI" id="CHEBI:57604"/>
        <dbReference type="ChEBI" id="CHEBI:58272"/>
        <dbReference type="ChEBI" id="CHEBI:456216"/>
        <dbReference type="EC" id="2.7.2.3"/>
    </reaction>
</comment>
<comment type="pathway">
    <text evidence="1">Carbohydrate degradation; glycolysis; pyruvate from D-glyceraldehyde 3-phosphate: step 2/5.</text>
</comment>
<comment type="subunit">
    <text evidence="1">Monomer.</text>
</comment>
<comment type="subcellular location">
    <subcellularLocation>
        <location evidence="1">Cytoplasm</location>
    </subcellularLocation>
</comment>
<comment type="similarity">
    <text evidence="1">Belongs to the phosphoglycerate kinase family.</text>
</comment>
<evidence type="ECO:0000255" key="1">
    <source>
        <dbReference type="HAMAP-Rule" id="MF_00145"/>
    </source>
</evidence>
<gene>
    <name evidence="1" type="primary">pgk</name>
    <name type="ordered locus">RL4011</name>
</gene>
<name>PGK_RHIJ3</name>
<organism>
    <name type="scientific">Rhizobium johnstonii (strain DSM 114642 / LMG 32736 / 3841)</name>
    <name type="common">Rhizobium leguminosarum bv. viciae</name>
    <dbReference type="NCBI Taxonomy" id="216596"/>
    <lineage>
        <taxon>Bacteria</taxon>
        <taxon>Pseudomonadati</taxon>
        <taxon>Pseudomonadota</taxon>
        <taxon>Alphaproteobacteria</taxon>
        <taxon>Hyphomicrobiales</taxon>
        <taxon>Rhizobiaceae</taxon>
        <taxon>Rhizobium/Agrobacterium group</taxon>
        <taxon>Rhizobium</taxon>
        <taxon>Rhizobium johnstonii</taxon>
    </lineage>
</organism>
<dbReference type="EC" id="2.7.2.3" evidence="1"/>
<dbReference type="EMBL" id="AM236080">
    <property type="protein sequence ID" value="CAK09501.1"/>
    <property type="molecule type" value="Genomic_DNA"/>
</dbReference>
<dbReference type="SMR" id="Q1MC31"/>
<dbReference type="EnsemblBacteria" id="CAK09501">
    <property type="protein sequence ID" value="CAK09501"/>
    <property type="gene ID" value="RL4011"/>
</dbReference>
<dbReference type="KEGG" id="rle:RL4011"/>
<dbReference type="eggNOG" id="COG0126">
    <property type="taxonomic scope" value="Bacteria"/>
</dbReference>
<dbReference type="HOGENOM" id="CLU_025427_0_2_5"/>
<dbReference type="UniPathway" id="UPA00109">
    <property type="reaction ID" value="UER00185"/>
</dbReference>
<dbReference type="Proteomes" id="UP000006575">
    <property type="component" value="Chromosome"/>
</dbReference>
<dbReference type="GO" id="GO:0005829">
    <property type="term" value="C:cytosol"/>
    <property type="evidence" value="ECO:0007669"/>
    <property type="project" value="TreeGrafter"/>
</dbReference>
<dbReference type="GO" id="GO:0043531">
    <property type="term" value="F:ADP binding"/>
    <property type="evidence" value="ECO:0007669"/>
    <property type="project" value="TreeGrafter"/>
</dbReference>
<dbReference type="GO" id="GO:0005524">
    <property type="term" value="F:ATP binding"/>
    <property type="evidence" value="ECO:0007669"/>
    <property type="project" value="UniProtKB-KW"/>
</dbReference>
<dbReference type="GO" id="GO:0004618">
    <property type="term" value="F:phosphoglycerate kinase activity"/>
    <property type="evidence" value="ECO:0007669"/>
    <property type="project" value="UniProtKB-UniRule"/>
</dbReference>
<dbReference type="GO" id="GO:0006094">
    <property type="term" value="P:gluconeogenesis"/>
    <property type="evidence" value="ECO:0007669"/>
    <property type="project" value="TreeGrafter"/>
</dbReference>
<dbReference type="GO" id="GO:0006096">
    <property type="term" value="P:glycolytic process"/>
    <property type="evidence" value="ECO:0007669"/>
    <property type="project" value="UniProtKB-UniRule"/>
</dbReference>
<dbReference type="FunFam" id="3.40.50.1260:FF:000006">
    <property type="entry name" value="Phosphoglycerate kinase"/>
    <property type="match status" value="1"/>
</dbReference>
<dbReference type="FunFam" id="3.40.50.1260:FF:000031">
    <property type="entry name" value="Phosphoglycerate kinase 1"/>
    <property type="match status" value="1"/>
</dbReference>
<dbReference type="Gene3D" id="3.40.50.1260">
    <property type="entry name" value="Phosphoglycerate kinase, N-terminal domain"/>
    <property type="match status" value="2"/>
</dbReference>
<dbReference type="HAMAP" id="MF_00145">
    <property type="entry name" value="Phosphoglyc_kinase"/>
    <property type="match status" value="1"/>
</dbReference>
<dbReference type="InterPro" id="IPR001576">
    <property type="entry name" value="Phosphoglycerate_kinase"/>
</dbReference>
<dbReference type="InterPro" id="IPR015911">
    <property type="entry name" value="Phosphoglycerate_kinase_CS"/>
</dbReference>
<dbReference type="InterPro" id="IPR015824">
    <property type="entry name" value="Phosphoglycerate_kinase_N"/>
</dbReference>
<dbReference type="InterPro" id="IPR036043">
    <property type="entry name" value="Phosphoglycerate_kinase_sf"/>
</dbReference>
<dbReference type="PANTHER" id="PTHR11406">
    <property type="entry name" value="PHOSPHOGLYCERATE KINASE"/>
    <property type="match status" value="1"/>
</dbReference>
<dbReference type="PANTHER" id="PTHR11406:SF23">
    <property type="entry name" value="PHOSPHOGLYCERATE KINASE 1, CHLOROPLASTIC-RELATED"/>
    <property type="match status" value="1"/>
</dbReference>
<dbReference type="Pfam" id="PF00162">
    <property type="entry name" value="PGK"/>
    <property type="match status" value="1"/>
</dbReference>
<dbReference type="PIRSF" id="PIRSF000724">
    <property type="entry name" value="Pgk"/>
    <property type="match status" value="1"/>
</dbReference>
<dbReference type="PRINTS" id="PR00477">
    <property type="entry name" value="PHGLYCKINASE"/>
</dbReference>
<dbReference type="SUPFAM" id="SSF53748">
    <property type="entry name" value="Phosphoglycerate kinase"/>
    <property type="match status" value="1"/>
</dbReference>
<dbReference type="PROSITE" id="PS00111">
    <property type="entry name" value="PGLYCERATE_KINASE"/>
    <property type="match status" value="1"/>
</dbReference>
<accession>Q1MC31</accession>